<gene>
    <name evidence="2" type="primary">infB</name>
    <name type="ordered locus">Lcho_1701</name>
</gene>
<protein>
    <recommendedName>
        <fullName evidence="2">Translation initiation factor IF-2</fullName>
    </recommendedName>
</protein>
<name>IF2_LEPCP</name>
<sequence length="991" mass="104938">MAVTTVAQFATELNRPASTLLEQLQHAGVSKASASDPLTDTDKEKLLAYLRTSHGTSGADRKKITLTKKSTSEIKQADASGKARTIQVEVRKKRVFVKRDDPTGASSESHDSQDVQELSAAEEAELQRREEEALREAEALRRQQEEEAAQRQRAAEEQARQEREARERAEREAAERAAAEAAARVAAEAAAALAAAEKAAATAPAPAPVAAVVPKAPAPAPVVAAPTLAVASLGAKPVAPAPTSGMRVIKAADIVAGEAQKQIDLDKRRKAAEAEAAAIRAMMAAPKKVMVAKKPEEPKPVVPAAGAVGKDGIKGTIHRPKTAAGAPAPGAAPGAAAKPGEKKSVKSEKLSSSWADDAKKRGAAAPASKGRAPDVRGGWKAPGGARGGRRGDRGGAVSNFTPPADVQIHEVHVPETISVADLAHKMSVKGSEVIKQLMRLGQMVTINQQLDQETAMIVVEEMGHKAFAAKLDDPDAFLEEENLAEAGESLPRPPVVTVMGHVDHGKTSLLDYIRTSRVAAGEAGGITQHIGAYHVETPRGVITFLDTPGHEAFTAMRARGAKATDIVILVVAADDGVMPQTKEAIAHSKAAGVPIVVAINKIDKPDSNLDRVRSELVAEGVVPEEFGGDAPFCLVSAKTGQGIDTLLEQVLLQAEVLELNAPQEALAKGLVIEARLDKGRGPVATVLVQSGTLKRGDVVLAGQSYGRVRAMLDETGKAAQEAGPSIPVEIQGLTEVPSAGDEFMVLADERRAREIATFRQGKYREVNLNRRQAAKLENMFENMGQGAAQTLALIIKADVQGSQEALAASLLKLSTDEVKVQIVHAAVGGISESDVNLALASKAVIIGFNVRADAGARKLADGNDVDLRYYNVIYDAVDEIKSAMSGMLAPEQREEAIGTAEIRTVFVATKIGTIAGSMVTSGLVRRNCRFRLLRNNIVIYTGEVDSVRRLKDDVKEVKEGFECGIKLKNYTDIAEGDQLEFFEIKEVARTL</sequence>
<evidence type="ECO:0000250" key="1"/>
<evidence type="ECO:0000255" key="2">
    <source>
        <dbReference type="HAMAP-Rule" id="MF_00100"/>
    </source>
</evidence>
<evidence type="ECO:0000256" key="3">
    <source>
        <dbReference type="SAM" id="MobiDB-lite"/>
    </source>
</evidence>
<organism>
    <name type="scientific">Leptothrix cholodnii (strain ATCC 51168 / LMG 8142 / SP-6)</name>
    <name type="common">Leptothrix discophora (strain SP-6)</name>
    <dbReference type="NCBI Taxonomy" id="395495"/>
    <lineage>
        <taxon>Bacteria</taxon>
        <taxon>Pseudomonadati</taxon>
        <taxon>Pseudomonadota</taxon>
        <taxon>Betaproteobacteria</taxon>
        <taxon>Burkholderiales</taxon>
        <taxon>Sphaerotilaceae</taxon>
        <taxon>Leptothrix</taxon>
    </lineage>
</organism>
<keyword id="KW-0963">Cytoplasm</keyword>
<keyword id="KW-0342">GTP-binding</keyword>
<keyword id="KW-0396">Initiation factor</keyword>
<keyword id="KW-0547">Nucleotide-binding</keyword>
<keyword id="KW-0648">Protein biosynthesis</keyword>
<keyword id="KW-1185">Reference proteome</keyword>
<feature type="chain" id="PRO_1000093800" description="Translation initiation factor IF-2">
    <location>
        <begin position="1"/>
        <end position="991"/>
    </location>
</feature>
<feature type="domain" description="tr-type G">
    <location>
        <begin position="491"/>
        <end position="658"/>
    </location>
</feature>
<feature type="region of interest" description="Disordered" evidence="3">
    <location>
        <begin position="53"/>
        <end position="85"/>
    </location>
</feature>
<feature type="region of interest" description="Disordered" evidence="3">
    <location>
        <begin position="97"/>
        <end position="175"/>
    </location>
</feature>
<feature type="region of interest" description="Disordered" evidence="3">
    <location>
        <begin position="312"/>
        <end position="395"/>
    </location>
</feature>
<feature type="region of interest" description="G1" evidence="1">
    <location>
        <begin position="500"/>
        <end position="507"/>
    </location>
</feature>
<feature type="region of interest" description="G2" evidence="1">
    <location>
        <begin position="525"/>
        <end position="529"/>
    </location>
</feature>
<feature type="region of interest" description="G3" evidence="1">
    <location>
        <begin position="546"/>
        <end position="549"/>
    </location>
</feature>
<feature type="region of interest" description="G4" evidence="1">
    <location>
        <begin position="600"/>
        <end position="603"/>
    </location>
</feature>
<feature type="region of interest" description="G5" evidence="1">
    <location>
        <begin position="636"/>
        <end position="638"/>
    </location>
</feature>
<feature type="compositionally biased region" description="Basic and acidic residues" evidence="3">
    <location>
        <begin position="97"/>
        <end position="113"/>
    </location>
</feature>
<feature type="compositionally biased region" description="Basic and acidic residues" evidence="3">
    <location>
        <begin position="125"/>
        <end position="175"/>
    </location>
</feature>
<feature type="compositionally biased region" description="Low complexity" evidence="3">
    <location>
        <begin position="323"/>
        <end position="338"/>
    </location>
</feature>
<feature type="compositionally biased region" description="Basic and acidic residues" evidence="3">
    <location>
        <begin position="339"/>
        <end position="349"/>
    </location>
</feature>
<feature type="binding site" evidence="2">
    <location>
        <begin position="500"/>
        <end position="507"/>
    </location>
    <ligand>
        <name>GTP</name>
        <dbReference type="ChEBI" id="CHEBI:37565"/>
    </ligand>
</feature>
<feature type="binding site" evidence="2">
    <location>
        <begin position="546"/>
        <end position="550"/>
    </location>
    <ligand>
        <name>GTP</name>
        <dbReference type="ChEBI" id="CHEBI:37565"/>
    </ligand>
</feature>
<feature type="binding site" evidence="2">
    <location>
        <begin position="600"/>
        <end position="603"/>
    </location>
    <ligand>
        <name>GTP</name>
        <dbReference type="ChEBI" id="CHEBI:37565"/>
    </ligand>
</feature>
<proteinExistence type="inferred from homology"/>
<accession>B1XY67</accession>
<dbReference type="EMBL" id="CP001013">
    <property type="protein sequence ID" value="ACB33968.1"/>
    <property type="molecule type" value="Genomic_DNA"/>
</dbReference>
<dbReference type="RefSeq" id="WP_012346729.1">
    <property type="nucleotide sequence ID" value="NC_010524.1"/>
</dbReference>
<dbReference type="SMR" id="B1XY67"/>
<dbReference type="STRING" id="395495.Lcho_1701"/>
<dbReference type="KEGG" id="lch:Lcho_1701"/>
<dbReference type="eggNOG" id="COG0532">
    <property type="taxonomic scope" value="Bacteria"/>
</dbReference>
<dbReference type="HOGENOM" id="CLU_006301_6_0_4"/>
<dbReference type="OrthoDB" id="9811804at2"/>
<dbReference type="Proteomes" id="UP000001693">
    <property type="component" value="Chromosome"/>
</dbReference>
<dbReference type="GO" id="GO:0005829">
    <property type="term" value="C:cytosol"/>
    <property type="evidence" value="ECO:0007669"/>
    <property type="project" value="TreeGrafter"/>
</dbReference>
<dbReference type="GO" id="GO:0005525">
    <property type="term" value="F:GTP binding"/>
    <property type="evidence" value="ECO:0007669"/>
    <property type="project" value="UniProtKB-KW"/>
</dbReference>
<dbReference type="GO" id="GO:0003924">
    <property type="term" value="F:GTPase activity"/>
    <property type="evidence" value="ECO:0007669"/>
    <property type="project" value="UniProtKB-UniRule"/>
</dbReference>
<dbReference type="GO" id="GO:0003743">
    <property type="term" value="F:translation initiation factor activity"/>
    <property type="evidence" value="ECO:0007669"/>
    <property type="project" value="UniProtKB-UniRule"/>
</dbReference>
<dbReference type="CDD" id="cd01887">
    <property type="entry name" value="IF2_eIF5B"/>
    <property type="match status" value="1"/>
</dbReference>
<dbReference type="CDD" id="cd03702">
    <property type="entry name" value="IF2_mtIF2_II"/>
    <property type="match status" value="1"/>
</dbReference>
<dbReference type="CDD" id="cd03692">
    <property type="entry name" value="mtIF2_IVc"/>
    <property type="match status" value="1"/>
</dbReference>
<dbReference type="FunFam" id="2.40.30.10:FF:000007">
    <property type="entry name" value="Translation initiation factor IF-2"/>
    <property type="match status" value="1"/>
</dbReference>
<dbReference type="FunFam" id="2.40.30.10:FF:000008">
    <property type="entry name" value="Translation initiation factor IF-2"/>
    <property type="match status" value="1"/>
</dbReference>
<dbReference type="FunFam" id="3.40.50.10050:FF:000001">
    <property type="entry name" value="Translation initiation factor IF-2"/>
    <property type="match status" value="1"/>
</dbReference>
<dbReference type="FunFam" id="3.40.50.300:FF:000019">
    <property type="entry name" value="Translation initiation factor IF-2"/>
    <property type="match status" value="1"/>
</dbReference>
<dbReference type="Gene3D" id="3.40.50.300">
    <property type="entry name" value="P-loop containing nucleotide triphosphate hydrolases"/>
    <property type="match status" value="1"/>
</dbReference>
<dbReference type="Gene3D" id="3.30.56.50">
    <property type="entry name" value="Putative DNA-binding domain, N-terminal subdomain of bacterial translation initiation factor IF2"/>
    <property type="match status" value="1"/>
</dbReference>
<dbReference type="Gene3D" id="2.40.30.10">
    <property type="entry name" value="Translation factors"/>
    <property type="match status" value="2"/>
</dbReference>
<dbReference type="Gene3D" id="3.40.50.10050">
    <property type="entry name" value="Translation initiation factor IF- 2, domain 3"/>
    <property type="match status" value="1"/>
</dbReference>
<dbReference type="HAMAP" id="MF_00100_B">
    <property type="entry name" value="IF_2_B"/>
    <property type="match status" value="1"/>
</dbReference>
<dbReference type="InterPro" id="IPR009061">
    <property type="entry name" value="DNA-bd_dom_put_sf"/>
</dbReference>
<dbReference type="InterPro" id="IPR053905">
    <property type="entry name" value="EF-G-like_DII"/>
</dbReference>
<dbReference type="InterPro" id="IPR013575">
    <property type="entry name" value="IF2_assoc_dom_bac"/>
</dbReference>
<dbReference type="InterPro" id="IPR044145">
    <property type="entry name" value="IF2_II"/>
</dbReference>
<dbReference type="InterPro" id="IPR006847">
    <property type="entry name" value="IF2_N"/>
</dbReference>
<dbReference type="InterPro" id="IPR027417">
    <property type="entry name" value="P-loop_NTPase"/>
</dbReference>
<dbReference type="InterPro" id="IPR005225">
    <property type="entry name" value="Small_GTP-bd"/>
</dbReference>
<dbReference type="InterPro" id="IPR000795">
    <property type="entry name" value="T_Tr_GTP-bd_dom"/>
</dbReference>
<dbReference type="InterPro" id="IPR000178">
    <property type="entry name" value="TF_IF2_bacterial-like"/>
</dbReference>
<dbReference type="InterPro" id="IPR015760">
    <property type="entry name" value="TIF_IF2"/>
</dbReference>
<dbReference type="InterPro" id="IPR023115">
    <property type="entry name" value="TIF_IF2_dom3"/>
</dbReference>
<dbReference type="InterPro" id="IPR036925">
    <property type="entry name" value="TIF_IF2_dom3_sf"/>
</dbReference>
<dbReference type="InterPro" id="IPR009000">
    <property type="entry name" value="Transl_B-barrel_sf"/>
</dbReference>
<dbReference type="NCBIfam" id="TIGR00487">
    <property type="entry name" value="IF-2"/>
    <property type="match status" value="1"/>
</dbReference>
<dbReference type="NCBIfam" id="TIGR00231">
    <property type="entry name" value="small_GTP"/>
    <property type="match status" value="1"/>
</dbReference>
<dbReference type="PANTHER" id="PTHR43381:SF5">
    <property type="entry name" value="TR-TYPE G DOMAIN-CONTAINING PROTEIN"/>
    <property type="match status" value="1"/>
</dbReference>
<dbReference type="PANTHER" id="PTHR43381">
    <property type="entry name" value="TRANSLATION INITIATION FACTOR IF-2-RELATED"/>
    <property type="match status" value="1"/>
</dbReference>
<dbReference type="Pfam" id="PF22042">
    <property type="entry name" value="EF-G_D2"/>
    <property type="match status" value="1"/>
</dbReference>
<dbReference type="Pfam" id="PF00009">
    <property type="entry name" value="GTP_EFTU"/>
    <property type="match status" value="1"/>
</dbReference>
<dbReference type="Pfam" id="PF11987">
    <property type="entry name" value="IF-2"/>
    <property type="match status" value="1"/>
</dbReference>
<dbReference type="Pfam" id="PF08364">
    <property type="entry name" value="IF2_assoc"/>
    <property type="match status" value="1"/>
</dbReference>
<dbReference type="Pfam" id="PF04760">
    <property type="entry name" value="IF2_N"/>
    <property type="match status" value="2"/>
</dbReference>
<dbReference type="SUPFAM" id="SSF52156">
    <property type="entry name" value="Initiation factor IF2/eIF5b, domain 3"/>
    <property type="match status" value="1"/>
</dbReference>
<dbReference type="SUPFAM" id="SSF52540">
    <property type="entry name" value="P-loop containing nucleoside triphosphate hydrolases"/>
    <property type="match status" value="1"/>
</dbReference>
<dbReference type="SUPFAM" id="SSF46955">
    <property type="entry name" value="Putative DNA-binding domain"/>
    <property type="match status" value="1"/>
</dbReference>
<dbReference type="SUPFAM" id="SSF50447">
    <property type="entry name" value="Translation proteins"/>
    <property type="match status" value="2"/>
</dbReference>
<dbReference type="PROSITE" id="PS51722">
    <property type="entry name" value="G_TR_2"/>
    <property type="match status" value="1"/>
</dbReference>
<reference key="1">
    <citation type="submission" date="2008-03" db="EMBL/GenBank/DDBJ databases">
        <title>Complete sequence of Leptothrix cholodnii SP-6.</title>
        <authorList>
            <consortium name="US DOE Joint Genome Institute"/>
            <person name="Copeland A."/>
            <person name="Lucas S."/>
            <person name="Lapidus A."/>
            <person name="Glavina del Rio T."/>
            <person name="Dalin E."/>
            <person name="Tice H."/>
            <person name="Bruce D."/>
            <person name="Goodwin L."/>
            <person name="Pitluck S."/>
            <person name="Chertkov O."/>
            <person name="Brettin T."/>
            <person name="Detter J.C."/>
            <person name="Han C."/>
            <person name="Kuske C.R."/>
            <person name="Schmutz J."/>
            <person name="Larimer F."/>
            <person name="Land M."/>
            <person name="Hauser L."/>
            <person name="Kyrpides N."/>
            <person name="Lykidis A."/>
            <person name="Emerson D."/>
            <person name="Richardson P."/>
        </authorList>
    </citation>
    <scope>NUCLEOTIDE SEQUENCE [LARGE SCALE GENOMIC DNA]</scope>
    <source>
        <strain>ATCC 51168 / LMG 8142 / SP-6</strain>
    </source>
</reference>
<comment type="function">
    <text evidence="2">One of the essential components for the initiation of protein synthesis. Protects formylmethionyl-tRNA from spontaneous hydrolysis and promotes its binding to the 30S ribosomal subunits. Also involved in the hydrolysis of GTP during the formation of the 70S ribosomal complex.</text>
</comment>
<comment type="subcellular location">
    <subcellularLocation>
        <location evidence="2">Cytoplasm</location>
    </subcellularLocation>
</comment>
<comment type="similarity">
    <text evidence="2">Belongs to the TRAFAC class translation factor GTPase superfamily. Classic translation factor GTPase family. IF-2 subfamily.</text>
</comment>